<dbReference type="EMBL" id="J02413">
    <property type="protein sequence ID" value="AAA46587.1"/>
    <property type="status" value="ALT_INIT"/>
    <property type="molecule type" value="Genomic_RNA"/>
</dbReference>
<dbReference type="PIR" id="A04180">
    <property type="entry name" value="VCTMCP"/>
</dbReference>
<dbReference type="SMR" id="P03581"/>
<dbReference type="iPTMnet" id="P03581"/>
<dbReference type="Proteomes" id="UP000007218">
    <property type="component" value="Genome"/>
</dbReference>
<dbReference type="GO" id="GO:0019029">
    <property type="term" value="C:helical viral capsid"/>
    <property type="evidence" value="ECO:0007669"/>
    <property type="project" value="UniProtKB-KW"/>
</dbReference>
<dbReference type="GO" id="GO:0005198">
    <property type="term" value="F:structural molecule activity"/>
    <property type="evidence" value="ECO:0007669"/>
    <property type="project" value="InterPro"/>
</dbReference>
<dbReference type="Gene3D" id="1.20.120.70">
    <property type="entry name" value="Tobacco mosaic virus-like, coat protein"/>
    <property type="match status" value="1"/>
</dbReference>
<dbReference type="InterPro" id="IPR001337">
    <property type="entry name" value="TMV-like_coat"/>
</dbReference>
<dbReference type="InterPro" id="IPR036417">
    <property type="entry name" value="TMV-like_coat_sf"/>
</dbReference>
<dbReference type="Pfam" id="PF00721">
    <property type="entry name" value="TMV_coat"/>
    <property type="match status" value="1"/>
</dbReference>
<dbReference type="SUPFAM" id="SSF47195">
    <property type="entry name" value="TMV-like viral coat proteins"/>
    <property type="match status" value="1"/>
</dbReference>
<comment type="function">
    <text>Capsid protein self-assembles to form rod-shaped virions about 18 nm in diameter with a central canal enclosing the viral genomic RNA.</text>
</comment>
<comment type="subcellular location">
    <subcellularLocation>
        <location evidence="2">Virion</location>
    </subcellularLocation>
</comment>
<comment type="similarity">
    <text evidence="2">Belongs to the virgaviridae capsid protein family.</text>
</comment>
<comment type="sequence caution" evidence="2">
    <conflict type="erroneous initiation">
        <sequence resource="EMBL-CDS" id="AAA46587"/>
    </conflict>
</comment>
<accession>P03581</accession>
<name>CAPSD_SHMV</name>
<evidence type="ECO:0000269" key="1">
    <source>
    </source>
</evidence>
<evidence type="ECO:0000305" key="2"/>
<protein>
    <recommendedName>
        <fullName>Capsid protein</fullName>
    </recommendedName>
    <alternativeName>
        <fullName>Coat protein</fullName>
    </alternativeName>
</protein>
<sequence length="163" mass="18248">MAYSIPTPSQLVYFTENYADYIPFVNRLINARSNSFQTQSGRDELREILIKSQVSVVSPISRFPAEPAYYIYLRDPSISTVYTALLQSTDTRNRVIEVENSTNVTTAEQLNAVRRTDDASTAIHNNLEQLLSLLTNGTGVFNRTSFESASGLTWLVTTTPRTA</sequence>
<organism>
    <name type="scientific">Sunn-hemp mosaic virus</name>
    <name type="common">SHMV</name>
    <name type="synonym">TMV strain cowpea</name>
    <dbReference type="NCBI Taxonomy" id="12240"/>
    <lineage>
        <taxon>Viruses</taxon>
        <taxon>Riboviria</taxon>
        <taxon>Orthornavirae</taxon>
        <taxon>Kitrinoviricota</taxon>
        <taxon>Alsuviricetes</taxon>
        <taxon>Martellivirales</taxon>
        <taxon>Virgaviridae</taxon>
        <taxon>Tobamovirus</taxon>
    </lineage>
</organism>
<proteinExistence type="evidence at protein level"/>
<feature type="initiator methionine" description="Removed; by host" evidence="1">
    <location>
        <position position="1"/>
    </location>
</feature>
<feature type="chain" id="PRO_0000144944" description="Capsid protein">
    <location>
        <begin position="2"/>
        <end position="163"/>
    </location>
</feature>
<feature type="modified residue" description="N-acetylalanine; by host" evidence="1">
    <location>
        <position position="2"/>
    </location>
</feature>
<feature type="sequence conflict" description="In Ref. 2; AA sequence." evidence="2" ref="2">
    <original>N</original>
    <variation>D</variation>
    <location>
        <position position="103"/>
    </location>
</feature>
<feature type="sequence conflict" description="In Ref. 2; AA sequence." evidence="2" ref="2">
    <location>
        <position position="153"/>
    </location>
</feature>
<feature type="sequence conflict" description="In Ref. 2; AA sequence." evidence="2" ref="2">
    <original>TP</original>
    <variation>PT</variation>
    <location>
        <begin position="159"/>
        <end position="160"/>
    </location>
</feature>
<organismHost>
    <name type="scientific">Crotalaria juncea</name>
    <name type="common">Sunn hemp</name>
    <dbReference type="NCBI Taxonomy" id="3829"/>
</organismHost>
<organismHost>
    <name type="scientific">Lablab purpureus</name>
    <name type="common">Hyacinth bean</name>
    <name type="synonym">Dolichos lablab</name>
    <dbReference type="NCBI Taxonomy" id="35936"/>
</organismHost>
<organismHost>
    <name type="scientific">Mucuna</name>
    <dbReference type="NCBI Taxonomy" id="40336"/>
</organismHost>
<organismHost>
    <name type="scientific">Vigna unguiculata</name>
    <name type="common">Cowpea</name>
    <dbReference type="NCBI Taxonomy" id="3917"/>
</organismHost>
<reference key="1">
    <citation type="journal article" date="1981" name="Mol. Gen. Genet.">
        <title>Nucleotide sequence of a cloned cDNA copy of TMV (cowpea strain) RNA, including the assembly origin, the coat protein cistron, and the 3' non-coding region.</title>
        <authorList>
            <person name="Meshi T."/>
            <person name="Ohno T."/>
            <person name="Iba H."/>
            <person name="Okada Y."/>
        </authorList>
    </citation>
    <scope>NUCLEOTIDE SEQUENCE [GENOMIC RNA]</scope>
</reference>
<reference key="2">
    <citation type="journal article" date="1975" name="Biochim. Biophys. Acta">
        <title>The amino acid sequence of the cowpea strain of tobacco mosaic virus protein.</title>
        <authorList>
            <person name="Rees M.W."/>
            <person name="Short M.N."/>
        </authorList>
    </citation>
    <scope>PROTEIN SEQUENCE OF 2-163</scope>
    <scope>ACETYLATION AT ALA-2</scope>
</reference>
<reference key="3">
    <citation type="journal article" date="1974" name="Biomed. Mass Spectrom.">
        <title>The amino acid sequences of the tryptic peptides of the cowpea strain of tobacco mosaic virus protein.</title>
        <authorList>
            <person name="Rees M.W."/>
            <person name="Short M.N."/>
            <person name="Self R."/>
            <person name="Eagles J."/>
        </authorList>
    </citation>
    <scope>PROTEIN SEQUENCE OF TRYPTIC PEPTIDES</scope>
</reference>
<gene>
    <name type="primary">CP</name>
</gene>
<keyword id="KW-0007">Acetylation</keyword>
<keyword id="KW-0167">Capsid protein</keyword>
<keyword id="KW-0903">Direct protein sequencing</keyword>
<keyword id="KW-1139">Helical capsid protein</keyword>
<keyword id="KW-1185">Reference proteome</keyword>
<keyword id="KW-0946">Virion</keyword>